<protein>
    <recommendedName>
        <fullName evidence="1">N-succinylarginine dihydrolase</fullName>
        <ecNumber evidence="1">3.5.3.23</ecNumber>
    </recommendedName>
</protein>
<feature type="chain" id="PRO_1000138006" description="N-succinylarginine dihydrolase">
    <location>
        <begin position="1"/>
        <end position="446"/>
    </location>
</feature>
<feature type="active site" evidence="1">
    <location>
        <position position="174"/>
    </location>
</feature>
<feature type="active site" evidence="1">
    <location>
        <position position="249"/>
    </location>
</feature>
<feature type="active site" description="Nucleophile" evidence="1">
    <location>
        <position position="370"/>
    </location>
</feature>
<feature type="binding site" evidence="1">
    <location>
        <begin position="19"/>
        <end position="28"/>
    </location>
    <ligand>
        <name>substrate</name>
    </ligand>
</feature>
<feature type="binding site" evidence="1">
    <location>
        <position position="110"/>
    </location>
    <ligand>
        <name>substrate</name>
    </ligand>
</feature>
<feature type="binding site" evidence="1">
    <location>
        <begin position="137"/>
        <end position="138"/>
    </location>
    <ligand>
        <name>substrate</name>
    </ligand>
</feature>
<feature type="binding site" evidence="1">
    <location>
        <position position="213"/>
    </location>
    <ligand>
        <name>substrate</name>
    </ligand>
</feature>
<feature type="binding site" evidence="1">
    <location>
        <position position="251"/>
    </location>
    <ligand>
        <name>substrate</name>
    </ligand>
</feature>
<feature type="binding site" evidence="1">
    <location>
        <position position="364"/>
    </location>
    <ligand>
        <name>substrate</name>
    </ligand>
</feature>
<accession>A9AD18</accession>
<dbReference type="EC" id="3.5.3.23" evidence="1"/>
<dbReference type="EMBL" id="CP000868">
    <property type="protein sequence ID" value="ABX15805.1"/>
    <property type="molecule type" value="Genomic_DNA"/>
</dbReference>
<dbReference type="EMBL" id="AP009385">
    <property type="protein sequence ID" value="BAG43064.1"/>
    <property type="molecule type" value="Genomic_DNA"/>
</dbReference>
<dbReference type="RefSeq" id="WP_012213759.1">
    <property type="nucleotide sequence ID" value="NC_010084.1"/>
</dbReference>
<dbReference type="SMR" id="A9AD18"/>
<dbReference type="STRING" id="395019.BMULJ_01124"/>
<dbReference type="KEGG" id="bmj:BMULJ_01124"/>
<dbReference type="KEGG" id="bmu:Bmul_2120"/>
<dbReference type="eggNOG" id="COG3724">
    <property type="taxonomic scope" value="Bacteria"/>
</dbReference>
<dbReference type="HOGENOM" id="CLU_053835_0_0_4"/>
<dbReference type="UniPathway" id="UPA00185">
    <property type="reaction ID" value="UER00280"/>
</dbReference>
<dbReference type="Proteomes" id="UP000008815">
    <property type="component" value="Chromosome 1"/>
</dbReference>
<dbReference type="GO" id="GO:0009015">
    <property type="term" value="F:N-succinylarginine dihydrolase activity"/>
    <property type="evidence" value="ECO:0007669"/>
    <property type="project" value="UniProtKB-UniRule"/>
</dbReference>
<dbReference type="GO" id="GO:0019544">
    <property type="term" value="P:arginine catabolic process to glutamate"/>
    <property type="evidence" value="ECO:0007669"/>
    <property type="project" value="UniProtKB-UniRule"/>
</dbReference>
<dbReference type="GO" id="GO:0019545">
    <property type="term" value="P:arginine catabolic process to succinate"/>
    <property type="evidence" value="ECO:0007669"/>
    <property type="project" value="UniProtKB-UniRule"/>
</dbReference>
<dbReference type="Gene3D" id="3.75.10.20">
    <property type="entry name" value="Succinylarginine dihydrolase"/>
    <property type="match status" value="1"/>
</dbReference>
<dbReference type="HAMAP" id="MF_01172">
    <property type="entry name" value="AstB"/>
    <property type="match status" value="1"/>
</dbReference>
<dbReference type="InterPro" id="IPR037031">
    <property type="entry name" value="AstB_sf"/>
</dbReference>
<dbReference type="InterPro" id="IPR007079">
    <property type="entry name" value="SuccinylArg_d-Hdrlase_AstB"/>
</dbReference>
<dbReference type="NCBIfam" id="TIGR03241">
    <property type="entry name" value="arg_catab_astB"/>
    <property type="match status" value="1"/>
</dbReference>
<dbReference type="NCBIfam" id="NF009789">
    <property type="entry name" value="PRK13281.1"/>
    <property type="match status" value="1"/>
</dbReference>
<dbReference type="PANTHER" id="PTHR30420">
    <property type="entry name" value="N-SUCCINYLARGININE DIHYDROLASE"/>
    <property type="match status" value="1"/>
</dbReference>
<dbReference type="PANTHER" id="PTHR30420:SF2">
    <property type="entry name" value="N-SUCCINYLARGININE DIHYDROLASE"/>
    <property type="match status" value="1"/>
</dbReference>
<dbReference type="Pfam" id="PF04996">
    <property type="entry name" value="AstB"/>
    <property type="match status" value="1"/>
</dbReference>
<dbReference type="SUPFAM" id="SSF55909">
    <property type="entry name" value="Pentein"/>
    <property type="match status" value="1"/>
</dbReference>
<name>ASTB_BURM1</name>
<organism>
    <name type="scientific">Burkholderia multivorans (strain ATCC 17616 / 249)</name>
    <dbReference type="NCBI Taxonomy" id="395019"/>
    <lineage>
        <taxon>Bacteria</taxon>
        <taxon>Pseudomonadati</taxon>
        <taxon>Pseudomonadota</taxon>
        <taxon>Betaproteobacteria</taxon>
        <taxon>Burkholderiales</taxon>
        <taxon>Burkholderiaceae</taxon>
        <taxon>Burkholderia</taxon>
        <taxon>Burkholderia cepacia complex</taxon>
    </lineage>
</organism>
<gene>
    <name evidence="1" type="primary">astB</name>
    <name type="ordered locus">Bmul_2120</name>
    <name type="ordered locus">BMULJ_01124</name>
</gene>
<comment type="function">
    <text evidence="1">Catalyzes the hydrolysis of N(2)-succinylarginine into N(2)-succinylornithine, ammonia and CO(2).</text>
</comment>
<comment type="catalytic activity">
    <reaction evidence="1">
        <text>N(2)-succinyl-L-arginine + 2 H2O + 2 H(+) = N(2)-succinyl-L-ornithine + 2 NH4(+) + CO2</text>
        <dbReference type="Rhea" id="RHEA:19533"/>
        <dbReference type="ChEBI" id="CHEBI:15377"/>
        <dbReference type="ChEBI" id="CHEBI:15378"/>
        <dbReference type="ChEBI" id="CHEBI:16526"/>
        <dbReference type="ChEBI" id="CHEBI:28938"/>
        <dbReference type="ChEBI" id="CHEBI:58241"/>
        <dbReference type="ChEBI" id="CHEBI:58514"/>
        <dbReference type="EC" id="3.5.3.23"/>
    </reaction>
</comment>
<comment type="pathway">
    <text evidence="1">Amino-acid degradation; L-arginine degradation via AST pathway; L-glutamate and succinate from L-arginine: step 2/5.</text>
</comment>
<comment type="subunit">
    <text evidence="1">Homodimer.</text>
</comment>
<comment type="similarity">
    <text evidence="1">Belongs to the succinylarginine dihydrolase family.</text>
</comment>
<evidence type="ECO:0000255" key="1">
    <source>
        <dbReference type="HAMAP-Rule" id="MF_01172"/>
    </source>
</evidence>
<proteinExistence type="inferred from homology"/>
<keyword id="KW-0056">Arginine metabolism</keyword>
<keyword id="KW-0378">Hydrolase</keyword>
<keyword id="KW-1185">Reference proteome</keyword>
<reference key="1">
    <citation type="submission" date="2007-10" db="EMBL/GenBank/DDBJ databases">
        <title>Complete sequence of chromosome 1 of Burkholderia multivorans ATCC 17616.</title>
        <authorList>
            <person name="Copeland A."/>
            <person name="Lucas S."/>
            <person name="Lapidus A."/>
            <person name="Barry K."/>
            <person name="Glavina del Rio T."/>
            <person name="Dalin E."/>
            <person name="Tice H."/>
            <person name="Pitluck S."/>
            <person name="Chain P."/>
            <person name="Malfatti S."/>
            <person name="Shin M."/>
            <person name="Vergez L."/>
            <person name="Schmutz J."/>
            <person name="Larimer F."/>
            <person name="Land M."/>
            <person name="Hauser L."/>
            <person name="Kyrpides N."/>
            <person name="Kim E."/>
            <person name="Tiedje J."/>
            <person name="Richardson P."/>
        </authorList>
    </citation>
    <scope>NUCLEOTIDE SEQUENCE [LARGE SCALE GENOMIC DNA]</scope>
    <source>
        <strain>ATCC 17616 / 249</strain>
    </source>
</reference>
<reference key="2">
    <citation type="submission" date="2007-04" db="EMBL/GenBank/DDBJ databases">
        <title>Complete genome sequence of Burkholderia multivorans ATCC 17616.</title>
        <authorList>
            <person name="Ohtsubo Y."/>
            <person name="Yamashita A."/>
            <person name="Kurokawa K."/>
            <person name="Takami H."/>
            <person name="Yuhara S."/>
            <person name="Nishiyama E."/>
            <person name="Endo R."/>
            <person name="Miyazaki R."/>
            <person name="Ono A."/>
            <person name="Yano K."/>
            <person name="Ito M."/>
            <person name="Sota M."/>
            <person name="Yuji N."/>
            <person name="Hattori M."/>
            <person name="Tsuda M."/>
        </authorList>
    </citation>
    <scope>NUCLEOTIDE SEQUENCE [LARGE SCALE GENOMIC DNA]</scope>
    <source>
        <strain>ATCC 17616 / 249</strain>
    </source>
</reference>
<sequence>MNAQEANFDGLVGPTHNYAGLSFGNVASLNNEKSVANPKAAAKQGLRKMKQLADLGFAQGVLPPQERPSLRLLRELGFSGKDADVIAKAAKQAPELLAAASSASAMWTANAATVSPSADTADGRVHFTPANLCSKLHRAIEHEATRRTLSTLFADRARFAVHDALTGTPALGDEGAANHTRFCAEYGKPGVEFFVYGRSEYRRGPEPKRYPARQTFEASRAVAQRHGLAEEATVYAQQDPDVIDAGVFHNDVISVGNRDTLFTHERAFVNKQAIYDTLTAALDARGARLNVIEVPDAAVSVNDAVTSYLFNSQLLSRADGSQVLVVPQECRENANVAAYLDHLAAGNGPIRDVLVFDLRESMKNGGGPACLRLRVVLTDAERAAVTSNVWIDDTLFTVLDAWIEKHYRDRLAPDDLADPALLVESRTALDELTQILRVGSLYDFQR</sequence>